<accession>P15367</accession>
<accession>D6VVV3</accession>
<keyword id="KW-0256">Endoplasmic reticulum</keyword>
<keyword id="KW-0325">Glycoprotein</keyword>
<keyword id="KW-0378">Hydrolase</keyword>
<keyword id="KW-0472">Membrane</keyword>
<keyword id="KW-0645">Protease</keyword>
<keyword id="KW-1185">Reference proteome</keyword>
<keyword id="KW-0735">Signal-anchor</keyword>
<keyword id="KW-0812">Transmembrane</keyword>
<keyword id="KW-1133">Transmembrane helix</keyword>
<protein>
    <recommendedName>
        <fullName>Signal peptidase complex catalytic subunit SEC11</fullName>
        <ecNumber evidence="3">3.4.21.89</ecNumber>
    </recommendedName>
    <alternativeName>
        <fullName>Secretory protein 11</fullName>
    </alternativeName>
    <alternativeName>
        <fullName>Signal peptidase I</fullName>
    </alternativeName>
</protein>
<proteinExistence type="evidence at protein level"/>
<evidence type="ECO:0000250" key="1">
    <source>
        <dbReference type="UniProtKB" id="P67812"/>
    </source>
</evidence>
<evidence type="ECO:0000255" key="2"/>
<evidence type="ECO:0000269" key="3">
    <source>
    </source>
</evidence>
<evidence type="ECO:0000269" key="4">
    <source>
    </source>
</evidence>
<evidence type="ECO:0000269" key="5">
    <source>
    </source>
</evidence>
<evidence type="ECO:0000269" key="6">
    <source>
    </source>
</evidence>
<evidence type="ECO:0000269" key="7">
    <source>
    </source>
</evidence>
<evidence type="ECO:0000269" key="8">
    <source>
    </source>
</evidence>
<evidence type="ECO:0000269" key="9">
    <source>
    </source>
</evidence>
<evidence type="ECO:0000269" key="10">
    <source>
    </source>
</evidence>
<evidence type="ECO:0000269" key="11">
    <source>
    </source>
</evidence>
<evidence type="ECO:0000305" key="12"/>
<evidence type="ECO:0000305" key="13">
    <source>
    </source>
</evidence>
<name>SEC11_YEAST</name>
<comment type="function">
    <text evidence="1 3 4 8 10">Catalytic component of the signal peptidase complex (SPC) which catalyzes the cleavage of N-terminal signal sequences from nascent proteins as they are translocated into the lumen of the endoplasmic reticulum (PubMed:10206957, PubMed:11058593, PubMed:2644273, PubMed:7615509). Specifically cleaves N-terminal signal peptides that contain a hydrophobic alpha-helix (h-region) shorter than 18-20 amino acids (By similarity).</text>
</comment>
<comment type="catalytic activity">
    <reaction evidence="3">
        <text>Cleavage of hydrophobic, N-terminal signal or leader sequences from secreted and periplasmic proteins.</text>
        <dbReference type="EC" id="3.4.21.89"/>
    </reaction>
</comment>
<comment type="subunit">
    <text evidence="1 3 7 11">Component of the signal peptidase complex (SPC) composed of a catalytic subunit SEC11 and three accessory subunits SPC1, SPC2 and SPC3 (PubMed:1846444, PubMed:9148931). The complex induces a local thinning of the ER membrane which is used to measure the length of the signal peptide (SP) h-region of protein substrates (By similarity). This ensures the selectivity of the complex towards h-regions shorter than 18-20 amino acids (By similarity). Interacts with SPC3 (PubMed:10206957). SPC associates with the translocon complex (PubMed:1846444, PubMed:9148931).</text>
</comment>
<comment type="interaction">
    <interactant intactId="EBI-16513">
        <id>P15367</id>
    </interactant>
    <interactant intactId="EBI-17823">
        <id>P46965</id>
        <label>SPC1</label>
    </interactant>
    <organismsDiffer>false</organismsDiffer>
    <experiments>4</experiments>
</comment>
<comment type="interaction">
    <interactant intactId="EBI-16513">
        <id>P15367</id>
    </interactant>
    <interactant intactId="EBI-17829">
        <id>Q12133</id>
        <label>SPC3</label>
    </interactant>
    <organismsDiffer>false</organismsDiffer>
    <experiments>4</experiments>
</comment>
<comment type="subcellular location">
    <subcellularLocation>
        <location evidence="3 5 8">Endoplasmic reticulum membrane</location>
        <topology evidence="3 5 8">Single-pass type II membrane protein</topology>
    </subcellularLocation>
</comment>
<comment type="domain">
    <text evidence="1">The C-terminal short (CTS) helix is essential for catalytic activity (By similarity). It may be accommodated as a transmembrane helix in the thinned membrane environment of the complex, similarly to the signal peptide in the complex substrates (By similarity).</text>
</comment>
<comment type="PTM">
    <text evidence="3">N-glycosylated.</text>
</comment>
<comment type="disruption phenotype">
    <text evidence="9">Leads to accumulation of core-glycosylated glycoprotein precursors.</text>
</comment>
<comment type="miscellaneous">
    <text evidence="6">Present with 3150 molecules/cell in log phase SD medium.</text>
</comment>
<comment type="similarity">
    <text evidence="12">Belongs to the peptidase S26B family.</text>
</comment>
<feature type="chain" id="PRO_0000109540" description="Signal peptidase complex catalytic subunit SEC11">
    <location>
        <begin position="1"/>
        <end position="167"/>
    </location>
</feature>
<feature type="topological domain" description="Cytoplasmic" evidence="2">
    <location>
        <begin position="1"/>
        <end position="9"/>
    </location>
</feature>
<feature type="transmembrane region" description="Helical; Signal-anchor for type II membrane protein" evidence="2">
    <location>
        <begin position="10"/>
        <end position="31"/>
    </location>
</feature>
<feature type="topological domain" description="Lumenal" evidence="2">
    <location>
        <begin position="32"/>
        <end position="167"/>
    </location>
</feature>
<feature type="region of interest" description="C-terminal short (CTS) helix" evidence="1">
    <location>
        <begin position="153"/>
        <end position="164"/>
    </location>
</feature>
<feature type="active site" description="Charge relay system" evidence="13">
    <location>
        <position position="44"/>
    </location>
</feature>
<feature type="active site" description="Charge relay system" evidence="13">
    <location>
        <position position="83"/>
    </location>
</feature>
<feature type="active site" description="Charge relay system" evidence="13">
    <location>
        <position position="109"/>
    </location>
</feature>
<feature type="glycosylation site" description="N-linked (GlcNAc...) asparagine" evidence="2">
    <location>
        <position position="121"/>
    </location>
</feature>
<feature type="mutagenesis site" description="Nonviable. Loss of catalytic activity. No effect on protein stability and interaction with SPC3." evidence="3">
    <original>S</original>
    <variation>A</variation>
    <location>
        <position position="44"/>
    </location>
</feature>
<feature type="mutagenesis site" description="Nonviable." evidence="3">
    <original>S</original>
    <variation>C</variation>
    <location>
        <position position="44"/>
    </location>
</feature>
<feature type="mutagenesis site" description="Nonviable. Loss of protein stability." evidence="3">
    <original>H</original>
    <variation>A</variation>
    <location>
        <position position="83"/>
    </location>
</feature>
<feature type="mutagenesis site" description="Nonviable. Loss of catalytic activity. No effect on protein stability." evidence="3">
    <original>H</original>
    <variation>F</variation>
    <location>
        <position position="83"/>
    </location>
</feature>
<feature type="mutagenesis site" description="Nonviable. Loss of catalytic activity. Loss of protein stability." evidence="3">
    <original>H</original>
    <variation>K</variation>
    <location>
        <position position="83"/>
    </location>
</feature>
<feature type="mutagenesis site" description="Nonviable. Loss of catalytic activity. Loss of protein stability." evidence="3">
    <original>D</original>
    <variation>E</variation>
    <location>
        <position position="103"/>
    </location>
</feature>
<feature type="mutagenesis site" description="Nonviable. Loss of catalytic activity. No effect on protein stability and interaction with SPC3." evidence="3">
    <original>D</original>
    <variation>N</variation>
    <location>
        <position position="103"/>
    </location>
</feature>
<feature type="mutagenesis site" description="Nonviable. Loss of catalytic activity. No effect on protein stability and interaction with SPC3." evidence="3">
    <original>D</original>
    <variation>E</variation>
    <location>
        <position position="109"/>
    </location>
</feature>
<feature type="mutagenesis site" description="Nonviable. Loss of catalytic activity. Loss of protein stability." evidence="3">
    <original>D</original>
    <variation>N</variation>
    <location>
        <position position="109"/>
    </location>
</feature>
<feature type="sequence conflict" description="In Ref. 1; CAA30533." evidence="12" ref="1">
    <original>A</original>
    <variation>R</variation>
    <location>
        <position position="162"/>
    </location>
</feature>
<sequence length="167" mass="18762">MNLRFELQKLLNVCFLFASAYMFWQGLAIATNSASPIVVVLSGSMEPAFQRGDILFLWNRNTFNQVGDVVVYEVEGKQIPIVHRVLRQHNNHADKQFLLTKGDNNAGNDISLYANKKIYLNKSKEIVGTVKGYFPQLGYITIWISENKYAKFALLGMLGLSALLGGE</sequence>
<reference key="1">
    <citation type="journal article" date="1988" name="J. Cell Biol.">
        <title>SEC11 is required for signal peptide processing and yeast cell growth.</title>
        <authorList>
            <person name="Boehni P.C."/>
            <person name="Deshaies R.J."/>
            <person name="Schekman R.W."/>
        </authorList>
    </citation>
    <scope>NUCLEOTIDE SEQUENCE [GENOMIC DNA]</scope>
    <scope>DISRUPTION PHENOTYPE</scope>
    <source>
        <strain>PBY408A</strain>
    </source>
</reference>
<reference key="2">
    <citation type="journal article" date="1997" name="Nature">
        <title>The nucleotide sequence of Saccharomyces cerevisiae chromosome IX.</title>
        <authorList>
            <person name="Churcher C.M."/>
            <person name="Bowman S."/>
            <person name="Badcock K."/>
            <person name="Bankier A.T."/>
            <person name="Brown D."/>
            <person name="Chillingworth T."/>
            <person name="Connor R."/>
            <person name="Devlin K."/>
            <person name="Gentles S."/>
            <person name="Hamlin N."/>
            <person name="Harris D.E."/>
            <person name="Horsnell T."/>
            <person name="Hunt S."/>
            <person name="Jagels K."/>
            <person name="Jones M."/>
            <person name="Lye G."/>
            <person name="Moule S."/>
            <person name="Odell C."/>
            <person name="Pearson D."/>
            <person name="Rajandream M.A."/>
            <person name="Rice P."/>
            <person name="Rowley N."/>
            <person name="Skelton J."/>
            <person name="Smith V."/>
            <person name="Walsh S.V."/>
            <person name="Whitehead S."/>
            <person name="Barrell B.G."/>
        </authorList>
    </citation>
    <scope>NUCLEOTIDE SEQUENCE [LARGE SCALE GENOMIC DNA]</scope>
    <source>
        <strain>ATCC 204508 / S288c</strain>
    </source>
</reference>
<reference key="3">
    <citation type="journal article" date="2014" name="G3 (Bethesda)">
        <title>The reference genome sequence of Saccharomyces cerevisiae: Then and now.</title>
        <authorList>
            <person name="Engel S.R."/>
            <person name="Dietrich F.S."/>
            <person name="Fisk D.G."/>
            <person name="Binkley G."/>
            <person name="Balakrishnan R."/>
            <person name="Costanzo M.C."/>
            <person name="Dwight S.S."/>
            <person name="Hitz B.C."/>
            <person name="Karra K."/>
            <person name="Nash R.S."/>
            <person name="Weng S."/>
            <person name="Wong E.D."/>
            <person name="Lloyd P."/>
            <person name="Skrzypek M.S."/>
            <person name="Miyasato S.R."/>
            <person name="Simison M."/>
            <person name="Cherry J.M."/>
        </authorList>
    </citation>
    <scope>GENOME REANNOTATION</scope>
    <source>
        <strain>ATCC 204508 / S288c</strain>
    </source>
</reference>
<reference key="4">
    <citation type="journal article" date="2007" name="Genome Res.">
        <title>Approaching a complete repository of sequence-verified protein-encoding clones for Saccharomyces cerevisiae.</title>
        <authorList>
            <person name="Hu Y."/>
            <person name="Rolfs A."/>
            <person name="Bhullar B."/>
            <person name="Murthy T.V.S."/>
            <person name="Zhu C."/>
            <person name="Berger M.F."/>
            <person name="Camargo A.A."/>
            <person name="Kelley F."/>
            <person name="McCarron S."/>
            <person name="Jepson D."/>
            <person name="Richardson A."/>
            <person name="Raphael J."/>
            <person name="Moreira D."/>
            <person name="Taycher E."/>
            <person name="Zuo D."/>
            <person name="Mohr S."/>
            <person name="Kane M.F."/>
            <person name="Williamson J."/>
            <person name="Simpson A.J.G."/>
            <person name="Bulyk M.L."/>
            <person name="Harlow E."/>
            <person name="Marsischky G."/>
            <person name="Kolodner R.D."/>
            <person name="LaBaer J."/>
        </authorList>
    </citation>
    <scope>NUCLEOTIDE SEQUENCE [GENOMIC DNA]</scope>
    <source>
        <strain>ATCC 204508 / S288c</strain>
    </source>
</reference>
<reference key="5">
    <citation type="journal article" date="1989" name="J. Biol. Chem.">
        <title>Solubilization and characterization of yeast signal peptidase.</title>
        <authorList>
            <person name="YaDeau J.T."/>
            <person name="Blobel G."/>
        </authorList>
    </citation>
    <scope>FUNCTION</scope>
    <scope>SUBCELLULAR LOCATION</scope>
</reference>
<reference key="6">
    <citation type="journal article" date="1991" name="Proc. Natl. Acad. Sci. U.S.A.">
        <title>Yeast signal peptidase contains a glycoprotein and the Sec11 gene product.</title>
        <authorList>
            <person name="YaDeau J.T."/>
            <person name="Klein C."/>
            <person name="Blobel G."/>
        </authorList>
    </citation>
    <scope>IDENTIFICATION IN THE SIGNAL PEPTIDASE COMPLEX</scope>
</reference>
<reference key="7">
    <citation type="journal article" date="1995" name="J. Biol. Chem.">
        <title>A mutation affecting signal peptidase inhibits degradation of an abnormal membrane protein in Saccharomyces cerevisiae.</title>
        <authorList>
            <person name="Mullins C."/>
            <person name="Lu Y."/>
            <person name="Campbell A."/>
            <person name="Fang H."/>
            <person name="Green N."/>
        </authorList>
    </citation>
    <scope>FUNCTION</scope>
</reference>
<reference key="8">
    <citation type="journal article" date="1997" name="J. Biol. Chem.">
        <title>The yeast SPC22/23 homolog Spc3p is essential for signal peptidase activity.</title>
        <authorList>
            <person name="Meyer H.A."/>
            <person name="Hartmann E."/>
        </authorList>
    </citation>
    <scope>IDENTIFICATION IN THE SIGNAL PEPTIDASE COMPLEX</scope>
</reference>
<reference key="9">
    <citation type="journal article" date="1999" name="J. Biol. Chem.">
        <title>The catalytic mechanism of endoplasmic reticulum signal peptidase appears to be distinct from most eubacterial signal peptidases.</title>
        <authorList>
            <person name="VanValkenburgh C."/>
            <person name="Chen X."/>
            <person name="Mullins C."/>
            <person name="Fang H."/>
            <person name="Green N."/>
        </authorList>
    </citation>
    <scope>FUNCTION</scope>
    <scope>CATALYTIC ACTIVITY</scope>
    <scope>ACTIVE SITE</scope>
    <scope>INTERACTION WITH SPC3</scope>
    <scope>SUBCELLULAR LOCATION</scope>
    <scope>GLYCOSYLATION</scope>
    <scope>MUTAGENESIS OF SER-44; HIS-83; ASP-103 AND ASP-109</scope>
</reference>
<reference key="10">
    <citation type="journal article" date="2001" name="J. Biol. Chem.">
        <title>Signal peptidase and oligosaccharyltransferase interact in a sequential and dependent manner within the endoplasmic reticulum.</title>
        <authorList>
            <person name="Chen X."/>
            <person name="VanValkenburgh C."/>
            <person name="Liang H."/>
            <person name="Fang H."/>
            <person name="Green N."/>
        </authorList>
    </citation>
    <scope>FUNCTION</scope>
</reference>
<reference key="11">
    <citation type="journal article" date="2003" name="Nature">
        <title>Global analysis of protein localization in budding yeast.</title>
        <authorList>
            <person name="Huh W.-K."/>
            <person name="Falvo J.V."/>
            <person name="Gerke L.C."/>
            <person name="Carroll A.S."/>
            <person name="Howson R.W."/>
            <person name="Weissman J.S."/>
            <person name="O'Shea E.K."/>
        </authorList>
    </citation>
    <scope>SUBCELLULAR LOCATION [LARGE SCALE ANALYSIS]</scope>
</reference>
<reference key="12">
    <citation type="journal article" date="2003" name="Nature">
        <title>Global analysis of protein expression in yeast.</title>
        <authorList>
            <person name="Ghaemmaghami S."/>
            <person name="Huh W.-K."/>
            <person name="Bower K."/>
            <person name="Howson R.W."/>
            <person name="Belle A."/>
            <person name="Dephoure N."/>
            <person name="O'Shea E.K."/>
            <person name="Weissman J.S."/>
        </authorList>
    </citation>
    <scope>LEVEL OF PROTEIN EXPRESSION [LARGE SCALE ANALYSIS]</scope>
</reference>
<dbReference type="EC" id="3.4.21.89" evidence="3"/>
<dbReference type="EMBL" id="X07694">
    <property type="protein sequence ID" value="CAA30533.1"/>
    <property type="molecule type" value="Genomic_DNA"/>
</dbReference>
<dbReference type="EMBL" id="Z38061">
    <property type="protein sequence ID" value="CAA86182.1"/>
    <property type="molecule type" value="Genomic_DNA"/>
</dbReference>
<dbReference type="EMBL" id="AY558239">
    <property type="protein sequence ID" value="AAS56565.1"/>
    <property type="molecule type" value="Genomic_DNA"/>
</dbReference>
<dbReference type="EMBL" id="BK006942">
    <property type="protein sequence ID" value="DAA08569.1"/>
    <property type="molecule type" value="Genomic_DNA"/>
</dbReference>
<dbReference type="PIR" id="S48484">
    <property type="entry name" value="S48484"/>
</dbReference>
<dbReference type="RefSeq" id="NP_012288.1">
    <property type="nucleotide sequence ID" value="NM_001179544.1"/>
</dbReference>
<dbReference type="SMR" id="P15367"/>
<dbReference type="BioGRID" id="35013">
    <property type="interactions" value="236"/>
</dbReference>
<dbReference type="ComplexPortal" id="CPX-1835">
    <property type="entry name" value="Signal peptidase complex"/>
</dbReference>
<dbReference type="DIP" id="DIP-5667N"/>
<dbReference type="FunCoup" id="P15367">
    <property type="interactions" value="828"/>
</dbReference>
<dbReference type="IntAct" id="P15367">
    <property type="interactions" value="9"/>
</dbReference>
<dbReference type="MINT" id="P15367"/>
<dbReference type="STRING" id="4932.YIR022W"/>
<dbReference type="MEROPS" id="S26.010"/>
<dbReference type="GlyCosmos" id="P15367">
    <property type="glycosylation" value="1 site, No reported glycans"/>
</dbReference>
<dbReference type="GlyGen" id="P15367">
    <property type="glycosylation" value="1 site"/>
</dbReference>
<dbReference type="iPTMnet" id="P15367"/>
<dbReference type="PaxDb" id="4932-YIR022W"/>
<dbReference type="PeptideAtlas" id="P15367"/>
<dbReference type="TopDownProteomics" id="P15367"/>
<dbReference type="EnsemblFungi" id="YIR022W_mRNA">
    <property type="protein sequence ID" value="YIR022W"/>
    <property type="gene ID" value="YIR022W"/>
</dbReference>
<dbReference type="GeneID" id="854840"/>
<dbReference type="KEGG" id="sce:YIR022W"/>
<dbReference type="AGR" id="SGD:S000001461"/>
<dbReference type="SGD" id="S000001461">
    <property type="gene designation" value="SEC11"/>
</dbReference>
<dbReference type="VEuPathDB" id="FungiDB:YIR022W"/>
<dbReference type="eggNOG" id="KOG3342">
    <property type="taxonomic scope" value="Eukaryota"/>
</dbReference>
<dbReference type="GeneTree" id="ENSGT00390000015600"/>
<dbReference type="HOGENOM" id="CLU_089996_0_0_1"/>
<dbReference type="InParanoid" id="P15367"/>
<dbReference type="OMA" id="ILMNEYP"/>
<dbReference type="OrthoDB" id="10257561at2759"/>
<dbReference type="BioCyc" id="YEAST:YIR022W-MONOMER"/>
<dbReference type="BRENDA" id="3.4.21.89">
    <property type="organism ID" value="984"/>
</dbReference>
<dbReference type="BioGRID-ORCS" id="854840">
    <property type="hits" value="7 hits in 10 CRISPR screens"/>
</dbReference>
<dbReference type="PRO" id="PR:P15367"/>
<dbReference type="Proteomes" id="UP000002311">
    <property type="component" value="Chromosome IX"/>
</dbReference>
<dbReference type="RNAct" id="P15367">
    <property type="molecule type" value="protein"/>
</dbReference>
<dbReference type="GO" id="GO:0005783">
    <property type="term" value="C:endoplasmic reticulum"/>
    <property type="evidence" value="ECO:0000314"/>
    <property type="project" value="SGD"/>
</dbReference>
<dbReference type="GO" id="GO:0005789">
    <property type="term" value="C:endoplasmic reticulum membrane"/>
    <property type="evidence" value="ECO:0000303"/>
    <property type="project" value="ComplexPortal"/>
</dbReference>
<dbReference type="GO" id="GO:0005787">
    <property type="term" value="C:signal peptidase complex"/>
    <property type="evidence" value="ECO:0000314"/>
    <property type="project" value="SGD"/>
</dbReference>
<dbReference type="GO" id="GO:0008233">
    <property type="term" value="F:peptidase activity"/>
    <property type="evidence" value="ECO:0000315"/>
    <property type="project" value="SGD"/>
</dbReference>
<dbReference type="GO" id="GO:0004252">
    <property type="term" value="F:serine-type endopeptidase activity"/>
    <property type="evidence" value="ECO:0007669"/>
    <property type="project" value="UniProtKB-EC"/>
</dbReference>
<dbReference type="GO" id="GO:0045047">
    <property type="term" value="P:protein targeting to ER"/>
    <property type="evidence" value="ECO:0000315"/>
    <property type="project" value="SGD"/>
</dbReference>
<dbReference type="GO" id="GO:0006465">
    <property type="term" value="P:signal peptide processing"/>
    <property type="evidence" value="ECO:0000314"/>
    <property type="project" value="SGD"/>
</dbReference>
<dbReference type="CDD" id="cd06462">
    <property type="entry name" value="Peptidase_S24_S26"/>
    <property type="match status" value="1"/>
</dbReference>
<dbReference type="InterPro" id="IPR036286">
    <property type="entry name" value="LexA/Signal_pep-like_sf"/>
</dbReference>
<dbReference type="InterPro" id="IPR019758">
    <property type="entry name" value="Pept_S26A_signal_pept_1_CS"/>
</dbReference>
<dbReference type="InterPro" id="IPR019756">
    <property type="entry name" value="Pept_S26A_signal_pept_1_Ser-AS"/>
</dbReference>
<dbReference type="InterPro" id="IPR015927">
    <property type="entry name" value="Peptidase_S24_S26A/B/C"/>
</dbReference>
<dbReference type="InterPro" id="IPR001733">
    <property type="entry name" value="Peptidase_S26B"/>
</dbReference>
<dbReference type="NCBIfam" id="TIGR02228">
    <property type="entry name" value="sigpep_I_arch"/>
    <property type="match status" value="1"/>
</dbReference>
<dbReference type="PANTHER" id="PTHR10806">
    <property type="entry name" value="SIGNAL PEPTIDASE COMPLEX CATALYTIC SUBUNIT SEC11"/>
    <property type="match status" value="1"/>
</dbReference>
<dbReference type="PANTHER" id="PTHR10806:SF6">
    <property type="entry name" value="SIGNAL PEPTIDASE COMPLEX CATALYTIC SUBUNIT SEC11"/>
    <property type="match status" value="1"/>
</dbReference>
<dbReference type="Pfam" id="PF00717">
    <property type="entry name" value="Peptidase_S24"/>
    <property type="match status" value="1"/>
</dbReference>
<dbReference type="PRINTS" id="PR00728">
    <property type="entry name" value="SIGNALPTASE"/>
</dbReference>
<dbReference type="SUPFAM" id="SSF51306">
    <property type="entry name" value="LexA/Signal peptidase"/>
    <property type="match status" value="1"/>
</dbReference>
<dbReference type="PROSITE" id="PS00501">
    <property type="entry name" value="SPASE_I_1"/>
    <property type="match status" value="1"/>
</dbReference>
<dbReference type="PROSITE" id="PS00761">
    <property type="entry name" value="SPASE_I_3"/>
    <property type="match status" value="1"/>
</dbReference>
<organism>
    <name type="scientific">Saccharomyces cerevisiae (strain ATCC 204508 / S288c)</name>
    <name type="common">Baker's yeast</name>
    <dbReference type="NCBI Taxonomy" id="559292"/>
    <lineage>
        <taxon>Eukaryota</taxon>
        <taxon>Fungi</taxon>
        <taxon>Dikarya</taxon>
        <taxon>Ascomycota</taxon>
        <taxon>Saccharomycotina</taxon>
        <taxon>Saccharomycetes</taxon>
        <taxon>Saccharomycetales</taxon>
        <taxon>Saccharomycetaceae</taxon>
        <taxon>Saccharomyces</taxon>
    </lineage>
</organism>
<gene>
    <name type="primary">SEC11</name>
    <name type="ordered locus">YIR022W</name>
</gene>